<proteinExistence type="evidence at transcript level"/>
<keyword id="KW-1048">Host nucleus</keyword>
<keyword id="KW-0964">Secreted</keyword>
<keyword id="KW-0732">Signal</keyword>
<keyword id="KW-0843">Virulence</keyword>
<name>RL161_PLAVT</name>
<organism>
    <name type="scientific">Plasmopara viticola</name>
    <name type="common">Downy mildew of grapevine</name>
    <name type="synonym">Botrytis viticola</name>
    <dbReference type="NCBI Taxonomy" id="143451"/>
    <lineage>
        <taxon>Eukaryota</taxon>
        <taxon>Sar</taxon>
        <taxon>Stramenopiles</taxon>
        <taxon>Oomycota</taxon>
        <taxon>Peronosporales</taxon>
        <taxon>Peronosporaceae</taxon>
        <taxon>Plasmopara</taxon>
    </lineage>
</organism>
<evidence type="ECO:0000255" key="1"/>
<evidence type="ECO:0000269" key="2">
    <source>
    </source>
</evidence>
<evidence type="ECO:0000303" key="3">
    <source>
    </source>
</evidence>
<evidence type="ECO:0000305" key="4"/>
<evidence type="ECO:0000305" key="5">
    <source>
    </source>
</evidence>
<dbReference type="GO" id="GO:0005576">
    <property type="term" value="C:extracellular region"/>
    <property type="evidence" value="ECO:0007669"/>
    <property type="project" value="UniProtKB-SubCell"/>
</dbReference>
<dbReference type="GO" id="GO:0042025">
    <property type="term" value="C:host cell nucleus"/>
    <property type="evidence" value="ECO:0007669"/>
    <property type="project" value="UniProtKB-SubCell"/>
</dbReference>
<dbReference type="CDD" id="cd09272">
    <property type="entry name" value="RNase_HI_RT_Ty1"/>
    <property type="match status" value="1"/>
</dbReference>
<dbReference type="PANTHER" id="PTHR11439">
    <property type="entry name" value="GAG-POL-RELATED RETROTRANSPOSON"/>
    <property type="match status" value="1"/>
</dbReference>
<dbReference type="PANTHER" id="PTHR11439:SF483">
    <property type="entry name" value="PEPTIDE SYNTHASE GLIP-LIKE, PUTATIVE (AFU_ORTHOLOGUE AFUA_3G12920)-RELATED"/>
    <property type="match status" value="1"/>
</dbReference>
<reference key="1">
    <citation type="journal article" date="2018" name="Front. Plant Sci.">
        <title>In planta functional analysis and subcellular localization of the oomycete pathogen Plasmopara viticola candidate RXLR effector repertoire.</title>
        <authorList>
            <person name="Liu Y."/>
            <person name="Lan X."/>
            <person name="Song S."/>
            <person name="Yin L."/>
            <person name="Dry I.B."/>
            <person name="Qu J."/>
            <person name="Xiang J."/>
            <person name="Lu J."/>
        </authorList>
    </citation>
    <scope>NUCLEOTIDE SEQUENCE [MRNA]</scope>
    <scope>DOMAIN</scope>
    <scope>FUNCTION</scope>
    <scope>SUBCELLULAR LOCATION</scope>
</reference>
<gene>
    <name evidence="3" type="primary">RXLR161</name>
</gene>
<protein>
    <recommendedName>
        <fullName evidence="3">Secreted RxLR effector protein 161</fullName>
    </recommendedName>
</protein>
<feature type="signal peptide" evidence="1">
    <location>
        <begin position="1"/>
        <end position="27"/>
    </location>
</feature>
<feature type="chain" id="PRO_0000447982" description="Secreted RxLR effector protein 161">
    <location>
        <begin position="28"/>
        <end position="142"/>
    </location>
</feature>
<feature type="short sequence motif" description="RxLR" evidence="5">
    <location>
        <begin position="48"/>
        <end position="51"/>
    </location>
</feature>
<accession>P0CV72</accession>
<comment type="function">
    <text evidence="2">Secreted effector that completely suppresses the host cell death induced by cell death-inducing proteins.</text>
</comment>
<comment type="subcellular location">
    <subcellularLocation>
        <location evidence="2">Secreted</location>
    </subcellularLocation>
    <subcellularLocation>
        <location evidence="2">Host chloroplast envelope</location>
    </subcellularLocation>
    <subcellularLocation>
        <location evidence="2">Host nucleus</location>
    </subcellularLocation>
</comment>
<comment type="domain">
    <text evidence="5">Has the canonical translocation RxLR motif, but lacks the canonical EER motif, which characterizes most oomycete effectors identified so far.</text>
</comment>
<comment type="similarity">
    <text evidence="4">Belongs to the RxLR effector family.</text>
</comment>
<sequence length="142" mass="15750">MKNVPYLSAVGAIMYLMVVTRPDLAAAVGVLSQFASDPCPTHWQALKRVLRYLQSTQTYGLEFTRAGTAKLVGYSDADWAGDVESRRSTSGYLFKLNGGCVSWRSKKQRTVALSSTEDEYMALSEATQEAVWLTVRTRRTKG</sequence>